<dbReference type="EMBL" id="AM933172">
    <property type="protein sequence ID" value="CAR34628.1"/>
    <property type="molecule type" value="Genomic_DNA"/>
</dbReference>
<dbReference type="RefSeq" id="WP_001144069.1">
    <property type="nucleotide sequence ID" value="NC_011294.1"/>
</dbReference>
<dbReference type="SMR" id="B5QZ45"/>
<dbReference type="GeneID" id="98390195"/>
<dbReference type="KEGG" id="set:SEN3052"/>
<dbReference type="HOGENOM" id="CLU_159258_1_0_6"/>
<dbReference type="Proteomes" id="UP000000613">
    <property type="component" value="Chromosome"/>
</dbReference>
<dbReference type="GO" id="GO:1990904">
    <property type="term" value="C:ribonucleoprotein complex"/>
    <property type="evidence" value="ECO:0007669"/>
    <property type="project" value="UniProtKB-KW"/>
</dbReference>
<dbReference type="GO" id="GO:0005840">
    <property type="term" value="C:ribosome"/>
    <property type="evidence" value="ECO:0007669"/>
    <property type="project" value="UniProtKB-KW"/>
</dbReference>
<dbReference type="GO" id="GO:0003735">
    <property type="term" value="F:structural constituent of ribosome"/>
    <property type="evidence" value="ECO:0007669"/>
    <property type="project" value="InterPro"/>
</dbReference>
<dbReference type="GO" id="GO:0006412">
    <property type="term" value="P:translation"/>
    <property type="evidence" value="ECO:0007669"/>
    <property type="project" value="UniProtKB-UniRule"/>
</dbReference>
<dbReference type="FunFam" id="1.20.5.1150:FF:000001">
    <property type="entry name" value="30S ribosomal protein S21"/>
    <property type="match status" value="1"/>
</dbReference>
<dbReference type="Gene3D" id="1.20.5.1150">
    <property type="entry name" value="Ribosomal protein S8"/>
    <property type="match status" value="1"/>
</dbReference>
<dbReference type="HAMAP" id="MF_00358">
    <property type="entry name" value="Ribosomal_bS21"/>
    <property type="match status" value="1"/>
</dbReference>
<dbReference type="InterPro" id="IPR001911">
    <property type="entry name" value="Ribosomal_bS21"/>
</dbReference>
<dbReference type="InterPro" id="IPR018278">
    <property type="entry name" value="Ribosomal_bS21_CS"/>
</dbReference>
<dbReference type="InterPro" id="IPR038380">
    <property type="entry name" value="Ribosomal_bS21_sf"/>
</dbReference>
<dbReference type="NCBIfam" id="TIGR00030">
    <property type="entry name" value="S21p"/>
    <property type="match status" value="1"/>
</dbReference>
<dbReference type="PANTHER" id="PTHR21109">
    <property type="entry name" value="MITOCHONDRIAL 28S RIBOSOMAL PROTEIN S21"/>
    <property type="match status" value="1"/>
</dbReference>
<dbReference type="PANTHER" id="PTHR21109:SF22">
    <property type="entry name" value="SMALL RIBOSOMAL SUBUNIT PROTEIN BS21"/>
    <property type="match status" value="1"/>
</dbReference>
<dbReference type="Pfam" id="PF01165">
    <property type="entry name" value="Ribosomal_S21"/>
    <property type="match status" value="1"/>
</dbReference>
<dbReference type="PRINTS" id="PR00976">
    <property type="entry name" value="RIBOSOMALS21"/>
</dbReference>
<dbReference type="PROSITE" id="PS01181">
    <property type="entry name" value="RIBOSOMAL_S21"/>
    <property type="match status" value="1"/>
</dbReference>
<feature type="chain" id="PRO_1000120656" description="Small ribosomal subunit protein bS21">
    <location>
        <begin position="1"/>
        <end position="71"/>
    </location>
</feature>
<feature type="region of interest" description="Disordered" evidence="2">
    <location>
        <begin position="43"/>
        <end position="71"/>
    </location>
</feature>
<feature type="compositionally biased region" description="Basic residues" evidence="2">
    <location>
        <begin position="46"/>
        <end position="59"/>
    </location>
</feature>
<feature type="compositionally biased region" description="Basic and acidic residues" evidence="2">
    <location>
        <begin position="60"/>
        <end position="71"/>
    </location>
</feature>
<proteinExistence type="inferred from homology"/>
<sequence>MPVIKVRENEPFDVALRRFKRSCEKAGVLAEVRRREFYEKPTTERKRAKASAVKRHAKKLARENARRTRLY</sequence>
<protein>
    <recommendedName>
        <fullName evidence="1">Small ribosomal subunit protein bS21</fullName>
    </recommendedName>
    <alternativeName>
        <fullName evidence="3">30S ribosomal protein S21</fullName>
    </alternativeName>
</protein>
<comment type="similarity">
    <text evidence="1">Belongs to the bacterial ribosomal protein bS21 family.</text>
</comment>
<evidence type="ECO:0000255" key="1">
    <source>
        <dbReference type="HAMAP-Rule" id="MF_00358"/>
    </source>
</evidence>
<evidence type="ECO:0000256" key="2">
    <source>
        <dbReference type="SAM" id="MobiDB-lite"/>
    </source>
</evidence>
<evidence type="ECO:0000305" key="3"/>
<gene>
    <name evidence="1" type="primary">rpsU</name>
    <name type="ordered locus">SEN3052</name>
</gene>
<keyword id="KW-0687">Ribonucleoprotein</keyword>
<keyword id="KW-0689">Ribosomal protein</keyword>
<organism>
    <name type="scientific">Salmonella enteritidis PT4 (strain P125109)</name>
    <dbReference type="NCBI Taxonomy" id="550537"/>
    <lineage>
        <taxon>Bacteria</taxon>
        <taxon>Pseudomonadati</taxon>
        <taxon>Pseudomonadota</taxon>
        <taxon>Gammaproteobacteria</taxon>
        <taxon>Enterobacterales</taxon>
        <taxon>Enterobacteriaceae</taxon>
        <taxon>Salmonella</taxon>
    </lineage>
</organism>
<name>RS21_SALEP</name>
<accession>B5QZ45</accession>
<reference key="1">
    <citation type="journal article" date="2008" name="Genome Res.">
        <title>Comparative genome analysis of Salmonella enteritidis PT4 and Salmonella gallinarum 287/91 provides insights into evolutionary and host adaptation pathways.</title>
        <authorList>
            <person name="Thomson N.R."/>
            <person name="Clayton D.J."/>
            <person name="Windhorst D."/>
            <person name="Vernikos G."/>
            <person name="Davidson S."/>
            <person name="Churcher C."/>
            <person name="Quail M.A."/>
            <person name="Stevens M."/>
            <person name="Jones M.A."/>
            <person name="Watson M."/>
            <person name="Barron A."/>
            <person name="Layton A."/>
            <person name="Pickard D."/>
            <person name="Kingsley R.A."/>
            <person name="Bignell A."/>
            <person name="Clark L."/>
            <person name="Harris B."/>
            <person name="Ormond D."/>
            <person name="Abdellah Z."/>
            <person name="Brooks K."/>
            <person name="Cherevach I."/>
            <person name="Chillingworth T."/>
            <person name="Woodward J."/>
            <person name="Norberczak H."/>
            <person name="Lord A."/>
            <person name="Arrowsmith C."/>
            <person name="Jagels K."/>
            <person name="Moule S."/>
            <person name="Mungall K."/>
            <person name="Saunders M."/>
            <person name="Whitehead S."/>
            <person name="Chabalgoity J.A."/>
            <person name="Maskell D."/>
            <person name="Humphreys T."/>
            <person name="Roberts M."/>
            <person name="Barrow P.A."/>
            <person name="Dougan G."/>
            <person name="Parkhill J."/>
        </authorList>
    </citation>
    <scope>NUCLEOTIDE SEQUENCE [LARGE SCALE GENOMIC DNA]</scope>
    <source>
        <strain>P125109</strain>
    </source>
</reference>